<organism>
    <name type="scientific">Salmonella typhi</name>
    <dbReference type="NCBI Taxonomy" id="90370"/>
    <lineage>
        <taxon>Bacteria</taxon>
        <taxon>Pseudomonadati</taxon>
        <taxon>Pseudomonadota</taxon>
        <taxon>Gammaproteobacteria</taxon>
        <taxon>Enterobacterales</taxon>
        <taxon>Enterobacteriaceae</taxon>
        <taxon>Salmonella</taxon>
    </lineage>
</organism>
<protein>
    <recommendedName>
        <fullName>Insertion element IS1 protein InsA</fullName>
    </recommendedName>
</protein>
<geneLocation type="plasmid">
    <name>pHCM1</name>
</geneLocation>
<sequence>MASVSISCPSCSATDGVVRNGKSTAGHQRYLCSHCRKTWQLQFTYTASQPGTHQKIIDMAMNGVGCRATARIMGVGLNTILRHLKNSGRSR</sequence>
<proteinExistence type="inferred from homology"/>
<keyword id="KW-0233">DNA recombination</keyword>
<keyword id="KW-0614">Plasmid</keyword>
<keyword id="KW-0814">Transposable element</keyword>
<keyword id="KW-0815">Transposition</keyword>
<accession>P0ADH1</accession>
<accession>P03827</accession>
<evidence type="ECO:0000250" key="1"/>
<evidence type="ECO:0000305" key="2"/>
<feature type="chain" id="PRO_0000075394" description="Insertion element IS1 protein InsA">
    <location>
        <begin position="1"/>
        <end position="91"/>
    </location>
</feature>
<gene>
    <name type="primary">insA</name>
    <name type="ordered locus">HCM1.05c</name>
</gene>
<name>INSA_SALTI</name>
<comment type="function">
    <text evidence="1">Absolutely required for transposition of IS1.</text>
</comment>
<comment type="similarity">
    <text evidence="2">Belongs to the IS1 elements InsA family.</text>
</comment>
<reference key="1">
    <citation type="journal article" date="2001" name="Nature">
        <title>Complete genome sequence of a multiple drug resistant Salmonella enterica serovar Typhi CT18.</title>
        <authorList>
            <person name="Parkhill J."/>
            <person name="Dougan G."/>
            <person name="James K.D."/>
            <person name="Thomson N.R."/>
            <person name="Pickard D."/>
            <person name="Wain J."/>
            <person name="Churcher C.M."/>
            <person name="Mungall K.L."/>
            <person name="Bentley S.D."/>
            <person name="Holden M.T.G."/>
            <person name="Sebaihia M."/>
            <person name="Baker S."/>
            <person name="Basham D."/>
            <person name="Brooks K."/>
            <person name="Chillingworth T."/>
            <person name="Connerton P."/>
            <person name="Cronin A."/>
            <person name="Davis P."/>
            <person name="Davies R.M."/>
            <person name="Dowd L."/>
            <person name="White N."/>
            <person name="Farrar J."/>
            <person name="Feltwell T."/>
            <person name="Hamlin N."/>
            <person name="Haque A."/>
            <person name="Hien T.T."/>
            <person name="Holroyd S."/>
            <person name="Jagels K."/>
            <person name="Krogh A."/>
            <person name="Larsen T.S."/>
            <person name="Leather S."/>
            <person name="Moule S."/>
            <person name="O'Gaora P."/>
            <person name="Parry C."/>
            <person name="Quail M.A."/>
            <person name="Rutherford K.M."/>
            <person name="Simmonds M."/>
            <person name="Skelton J."/>
            <person name="Stevens K."/>
            <person name="Whitehead S."/>
            <person name="Barrell B.G."/>
        </authorList>
    </citation>
    <scope>NUCLEOTIDE SEQUENCE [LARGE SCALE GENOMIC DNA]</scope>
    <source>
        <strain>CT18</strain>
    </source>
</reference>
<dbReference type="EMBL" id="AL513383">
    <property type="protein sequence ID" value="CAD09623.1"/>
    <property type="molecule type" value="Genomic_DNA"/>
</dbReference>
<dbReference type="RefSeq" id="NP_058308.1">
    <property type="nucleotide sequence ID" value="NC_002305.1"/>
</dbReference>
<dbReference type="RefSeq" id="NP_569237.1">
    <property type="nucleotide sequence ID" value="NC_003384.1"/>
</dbReference>
<dbReference type="SMR" id="P0ADH1"/>
<dbReference type="STRING" id="220341.gene:17586324"/>
<dbReference type="KEGG" id="sty:HCM1.05c"/>
<dbReference type="PATRIC" id="fig|220341.7.peg.5076"/>
<dbReference type="eggNOG" id="COG3677">
    <property type="taxonomic scope" value="Bacteria"/>
</dbReference>
<dbReference type="HOGENOM" id="CLU_076276_6_3_6"/>
<dbReference type="OMA" id="HCKSEDL"/>
<dbReference type="PRO" id="PR:P0ADH1"/>
<dbReference type="Proteomes" id="UP000000541">
    <property type="component" value="Plasmid pHCM1"/>
</dbReference>
<dbReference type="GO" id="GO:0006313">
    <property type="term" value="P:DNA transposition"/>
    <property type="evidence" value="ECO:0007669"/>
    <property type="project" value="InterPro"/>
</dbReference>
<dbReference type="InterPro" id="IPR024431">
    <property type="entry name" value="InsA_HTH_dom"/>
</dbReference>
<dbReference type="InterPro" id="IPR003220">
    <property type="entry name" value="InsA_N_dom_Znf"/>
</dbReference>
<dbReference type="InterPro" id="IPR051252">
    <property type="entry name" value="IS1_transposase_InsA"/>
</dbReference>
<dbReference type="PANTHER" id="PTHR47923">
    <property type="entry name" value="INSERTION ELEMENT IS1 1 PROTEIN INSA-RELATED"/>
    <property type="match status" value="1"/>
</dbReference>
<dbReference type="PANTHER" id="PTHR47923:SF1">
    <property type="entry name" value="INSERTION ELEMENT IS1 1 PROTEIN INSA-RELATED"/>
    <property type="match status" value="1"/>
</dbReference>
<dbReference type="Pfam" id="PF12759">
    <property type="entry name" value="HTH_Tnp_IS1"/>
    <property type="match status" value="1"/>
</dbReference>
<dbReference type="Pfam" id="PF03811">
    <property type="entry name" value="Zn_ribbon_InsA"/>
    <property type="match status" value="1"/>
</dbReference>